<protein>
    <recommendedName>
        <fullName evidence="1">DNA replication and repair protein RecF</fullName>
    </recommendedName>
</protein>
<feature type="chain" id="PRO_1000079599" description="DNA replication and repair protein RecF">
    <location>
        <begin position="1"/>
        <end position="394"/>
    </location>
</feature>
<feature type="binding site" evidence="1">
    <location>
        <begin position="30"/>
        <end position="37"/>
    </location>
    <ligand>
        <name>ATP</name>
        <dbReference type="ChEBI" id="CHEBI:30616"/>
    </ligand>
</feature>
<dbReference type="EMBL" id="CP000804">
    <property type="protein sequence ID" value="ABU58297.1"/>
    <property type="molecule type" value="Genomic_DNA"/>
</dbReference>
<dbReference type="RefSeq" id="WP_012120721.1">
    <property type="nucleotide sequence ID" value="NC_009767.1"/>
</dbReference>
<dbReference type="SMR" id="A7NF69"/>
<dbReference type="STRING" id="383372.Rcas_2214"/>
<dbReference type="KEGG" id="rca:Rcas_2214"/>
<dbReference type="eggNOG" id="COG1195">
    <property type="taxonomic scope" value="Bacteria"/>
</dbReference>
<dbReference type="HOGENOM" id="CLU_040267_0_1_0"/>
<dbReference type="OrthoDB" id="9803889at2"/>
<dbReference type="Proteomes" id="UP000000263">
    <property type="component" value="Chromosome"/>
</dbReference>
<dbReference type="GO" id="GO:0005737">
    <property type="term" value="C:cytoplasm"/>
    <property type="evidence" value="ECO:0007669"/>
    <property type="project" value="UniProtKB-SubCell"/>
</dbReference>
<dbReference type="GO" id="GO:0005524">
    <property type="term" value="F:ATP binding"/>
    <property type="evidence" value="ECO:0007669"/>
    <property type="project" value="UniProtKB-UniRule"/>
</dbReference>
<dbReference type="GO" id="GO:0003697">
    <property type="term" value="F:single-stranded DNA binding"/>
    <property type="evidence" value="ECO:0007669"/>
    <property type="project" value="UniProtKB-UniRule"/>
</dbReference>
<dbReference type="GO" id="GO:0006260">
    <property type="term" value="P:DNA replication"/>
    <property type="evidence" value="ECO:0007669"/>
    <property type="project" value="UniProtKB-UniRule"/>
</dbReference>
<dbReference type="GO" id="GO:0000731">
    <property type="term" value="P:DNA synthesis involved in DNA repair"/>
    <property type="evidence" value="ECO:0007669"/>
    <property type="project" value="TreeGrafter"/>
</dbReference>
<dbReference type="GO" id="GO:0006302">
    <property type="term" value="P:double-strand break repair"/>
    <property type="evidence" value="ECO:0007669"/>
    <property type="project" value="TreeGrafter"/>
</dbReference>
<dbReference type="GO" id="GO:0009432">
    <property type="term" value="P:SOS response"/>
    <property type="evidence" value="ECO:0007669"/>
    <property type="project" value="UniProtKB-UniRule"/>
</dbReference>
<dbReference type="Gene3D" id="3.40.50.300">
    <property type="entry name" value="P-loop containing nucleotide triphosphate hydrolases"/>
    <property type="match status" value="1"/>
</dbReference>
<dbReference type="Gene3D" id="1.20.1050.90">
    <property type="entry name" value="RecF/RecN/SMC, N-terminal domain"/>
    <property type="match status" value="1"/>
</dbReference>
<dbReference type="HAMAP" id="MF_00365">
    <property type="entry name" value="RecF"/>
    <property type="match status" value="1"/>
</dbReference>
<dbReference type="InterPro" id="IPR001238">
    <property type="entry name" value="DNA-binding_RecF"/>
</dbReference>
<dbReference type="InterPro" id="IPR018078">
    <property type="entry name" value="DNA-binding_RecF_CS"/>
</dbReference>
<dbReference type="InterPro" id="IPR027417">
    <property type="entry name" value="P-loop_NTPase"/>
</dbReference>
<dbReference type="InterPro" id="IPR003395">
    <property type="entry name" value="RecF/RecN/SMC_N"/>
</dbReference>
<dbReference type="InterPro" id="IPR042174">
    <property type="entry name" value="RecF_2"/>
</dbReference>
<dbReference type="NCBIfam" id="TIGR00611">
    <property type="entry name" value="recf"/>
    <property type="match status" value="1"/>
</dbReference>
<dbReference type="PANTHER" id="PTHR32182">
    <property type="entry name" value="DNA REPLICATION AND REPAIR PROTEIN RECF"/>
    <property type="match status" value="1"/>
</dbReference>
<dbReference type="PANTHER" id="PTHR32182:SF0">
    <property type="entry name" value="DNA REPLICATION AND REPAIR PROTEIN RECF"/>
    <property type="match status" value="1"/>
</dbReference>
<dbReference type="Pfam" id="PF02463">
    <property type="entry name" value="SMC_N"/>
    <property type="match status" value="1"/>
</dbReference>
<dbReference type="SUPFAM" id="SSF52540">
    <property type="entry name" value="P-loop containing nucleoside triphosphate hydrolases"/>
    <property type="match status" value="1"/>
</dbReference>
<dbReference type="PROSITE" id="PS00617">
    <property type="entry name" value="RECF_1"/>
    <property type="match status" value="1"/>
</dbReference>
<dbReference type="PROSITE" id="PS00618">
    <property type="entry name" value="RECF_2"/>
    <property type="match status" value="1"/>
</dbReference>
<keyword id="KW-0067">ATP-binding</keyword>
<keyword id="KW-0963">Cytoplasm</keyword>
<keyword id="KW-0227">DNA damage</keyword>
<keyword id="KW-0234">DNA repair</keyword>
<keyword id="KW-0235">DNA replication</keyword>
<keyword id="KW-0238">DNA-binding</keyword>
<keyword id="KW-0547">Nucleotide-binding</keyword>
<keyword id="KW-1185">Reference proteome</keyword>
<keyword id="KW-0742">SOS response</keyword>
<accession>A7NF69</accession>
<proteinExistence type="inferred from homology"/>
<reference key="1">
    <citation type="submission" date="2007-08" db="EMBL/GenBank/DDBJ databases">
        <title>Complete sequence of Roseiflexus castenholzii DSM 13941.</title>
        <authorList>
            <consortium name="US DOE Joint Genome Institute"/>
            <person name="Copeland A."/>
            <person name="Lucas S."/>
            <person name="Lapidus A."/>
            <person name="Barry K."/>
            <person name="Glavina del Rio T."/>
            <person name="Dalin E."/>
            <person name="Tice H."/>
            <person name="Pitluck S."/>
            <person name="Thompson L.S."/>
            <person name="Brettin T."/>
            <person name="Bruce D."/>
            <person name="Detter J.C."/>
            <person name="Han C."/>
            <person name="Tapia R."/>
            <person name="Schmutz J."/>
            <person name="Larimer F."/>
            <person name="Land M."/>
            <person name="Hauser L."/>
            <person name="Kyrpides N."/>
            <person name="Mikhailova N."/>
            <person name="Bryant D.A."/>
            <person name="Hanada S."/>
            <person name="Tsukatani Y."/>
            <person name="Richardson P."/>
        </authorList>
    </citation>
    <scope>NUCLEOTIDE SEQUENCE [LARGE SCALE GENOMIC DNA]</scope>
    <source>
        <strain>DSM 13941 / HLO8</strain>
    </source>
</reference>
<gene>
    <name evidence="1" type="primary">recF</name>
    <name type="ordered locus">Rcas_2214</name>
</gene>
<organism>
    <name type="scientific">Roseiflexus castenholzii (strain DSM 13941 / HLO8)</name>
    <dbReference type="NCBI Taxonomy" id="383372"/>
    <lineage>
        <taxon>Bacteria</taxon>
        <taxon>Bacillati</taxon>
        <taxon>Chloroflexota</taxon>
        <taxon>Chloroflexia</taxon>
        <taxon>Chloroflexales</taxon>
        <taxon>Roseiflexineae</taxon>
        <taxon>Roseiflexaceae</taxon>
        <taxon>Roseiflexus</taxon>
    </lineage>
</organism>
<comment type="function">
    <text evidence="1">The RecF protein is involved in DNA metabolism; it is required for DNA replication and normal SOS inducibility. RecF binds preferentially to single-stranded, linear DNA. It also seems to bind ATP.</text>
</comment>
<comment type="subcellular location">
    <subcellularLocation>
        <location evidence="1">Cytoplasm</location>
    </subcellularLocation>
</comment>
<comment type="similarity">
    <text evidence="1">Belongs to the RecF family.</text>
</comment>
<sequence length="394" mass="43967">MYVTHLSLRDFRNYERLDLNLEPGVTLLYGPNAAGKTTVLEAIYFLATTRSPRAGADRELVRFEAQGDLGVPPFARLVCDVVRADGYVRLEVVVQRRAEEESAIGATPTIKTVRIDRKAVRALDLVGNLRVVLFTPADIALVTGAPAERRRYLDVTLSQIDGRYVRTLAHYQKVVQQRNSLLRAWREGRRPLRYADDELAFWDRELAMAGAYLLRERLHAVVDLNALAGPLYCRMSGGDTPLTLAYQSSVAGIDSVTDSRAIEQAFLAHLTRLRDDEIGRGQTLIGPHRDDLLIAVGGVPIGAYGSRGQQRSATLSLKLGEAKLMRIRTGDAPVLLLDDLLSELDAERRSHVQDILERPDQQTIVTATGTDDFDLKFLTRARRWRVESGHLYPA</sequence>
<name>RECF_ROSCS</name>
<evidence type="ECO:0000255" key="1">
    <source>
        <dbReference type="HAMAP-Rule" id="MF_00365"/>
    </source>
</evidence>